<organism>
    <name type="scientific">Fusobacterium nucleatum subsp. nucleatum (strain ATCC 25586 / DSM 15643 / BCRC 10681 / CIP 101130 / JCM 8532 / KCTC 2640 / LMG 13131 / VPI 4355)</name>
    <dbReference type="NCBI Taxonomy" id="190304"/>
    <lineage>
        <taxon>Bacteria</taxon>
        <taxon>Fusobacteriati</taxon>
        <taxon>Fusobacteriota</taxon>
        <taxon>Fusobacteriia</taxon>
        <taxon>Fusobacteriales</taxon>
        <taxon>Fusobacteriaceae</taxon>
        <taxon>Fusobacterium</taxon>
    </lineage>
</organism>
<evidence type="ECO:0000255" key="1">
    <source>
        <dbReference type="HAMAP-Rule" id="MF_00086"/>
    </source>
</evidence>
<proteinExistence type="inferred from homology"/>
<dbReference type="EC" id="2.5.1.6" evidence="1"/>
<dbReference type="EMBL" id="AE009951">
    <property type="protein sequence ID" value="AAL94558.1"/>
    <property type="molecule type" value="Genomic_DNA"/>
</dbReference>
<dbReference type="RefSeq" id="NP_603259.1">
    <property type="nucleotide sequence ID" value="NC_003454.1"/>
</dbReference>
<dbReference type="RefSeq" id="WP_011016332.1">
    <property type="nucleotide sequence ID" value="NZ_CP028101.1"/>
</dbReference>
<dbReference type="SMR" id="Q8RGE5"/>
<dbReference type="FunCoup" id="Q8RGE5">
    <property type="interactions" value="381"/>
</dbReference>
<dbReference type="STRING" id="190304.FN0355"/>
<dbReference type="PaxDb" id="190304-FN0355"/>
<dbReference type="EnsemblBacteria" id="AAL94558">
    <property type="protein sequence ID" value="AAL94558"/>
    <property type="gene ID" value="FN0355"/>
</dbReference>
<dbReference type="GeneID" id="79783364"/>
<dbReference type="KEGG" id="fnu:FN0355"/>
<dbReference type="PATRIC" id="fig|190304.8.peg.932"/>
<dbReference type="eggNOG" id="COG0192">
    <property type="taxonomic scope" value="Bacteria"/>
</dbReference>
<dbReference type="HOGENOM" id="CLU_041802_1_1_0"/>
<dbReference type="InParanoid" id="Q8RGE5"/>
<dbReference type="BioCyc" id="FNUC190304:G1FZS-952-MONOMER"/>
<dbReference type="UniPathway" id="UPA00315">
    <property type="reaction ID" value="UER00080"/>
</dbReference>
<dbReference type="Proteomes" id="UP000002521">
    <property type="component" value="Chromosome"/>
</dbReference>
<dbReference type="GO" id="GO:0005829">
    <property type="term" value="C:cytosol"/>
    <property type="evidence" value="ECO:0000318"/>
    <property type="project" value="GO_Central"/>
</dbReference>
<dbReference type="GO" id="GO:0005524">
    <property type="term" value="F:ATP binding"/>
    <property type="evidence" value="ECO:0007669"/>
    <property type="project" value="UniProtKB-UniRule"/>
</dbReference>
<dbReference type="GO" id="GO:0000287">
    <property type="term" value="F:magnesium ion binding"/>
    <property type="evidence" value="ECO:0007669"/>
    <property type="project" value="UniProtKB-UniRule"/>
</dbReference>
<dbReference type="GO" id="GO:0004478">
    <property type="term" value="F:methionine adenosyltransferase activity"/>
    <property type="evidence" value="ECO:0000318"/>
    <property type="project" value="GO_Central"/>
</dbReference>
<dbReference type="GO" id="GO:0006730">
    <property type="term" value="P:one-carbon metabolic process"/>
    <property type="evidence" value="ECO:0007669"/>
    <property type="project" value="UniProtKB-KW"/>
</dbReference>
<dbReference type="GO" id="GO:0006556">
    <property type="term" value="P:S-adenosylmethionine biosynthetic process"/>
    <property type="evidence" value="ECO:0000318"/>
    <property type="project" value="GO_Central"/>
</dbReference>
<dbReference type="CDD" id="cd18079">
    <property type="entry name" value="S-AdoMet_synt"/>
    <property type="match status" value="1"/>
</dbReference>
<dbReference type="FunFam" id="3.30.300.10:FF:000003">
    <property type="entry name" value="S-adenosylmethionine synthase"/>
    <property type="match status" value="1"/>
</dbReference>
<dbReference type="Gene3D" id="3.30.300.10">
    <property type="match status" value="3"/>
</dbReference>
<dbReference type="HAMAP" id="MF_00086">
    <property type="entry name" value="S_AdoMet_synth1"/>
    <property type="match status" value="1"/>
</dbReference>
<dbReference type="InterPro" id="IPR022631">
    <property type="entry name" value="ADOMET_SYNTHASE_CS"/>
</dbReference>
<dbReference type="InterPro" id="IPR022630">
    <property type="entry name" value="S-AdoMet_synt_C"/>
</dbReference>
<dbReference type="InterPro" id="IPR022629">
    <property type="entry name" value="S-AdoMet_synt_central"/>
</dbReference>
<dbReference type="InterPro" id="IPR022628">
    <property type="entry name" value="S-AdoMet_synt_N"/>
</dbReference>
<dbReference type="InterPro" id="IPR002133">
    <property type="entry name" value="S-AdoMet_synthetase"/>
</dbReference>
<dbReference type="InterPro" id="IPR022636">
    <property type="entry name" value="S-AdoMet_synthetase_sfam"/>
</dbReference>
<dbReference type="NCBIfam" id="TIGR01034">
    <property type="entry name" value="metK"/>
    <property type="match status" value="1"/>
</dbReference>
<dbReference type="PANTHER" id="PTHR11964">
    <property type="entry name" value="S-ADENOSYLMETHIONINE SYNTHETASE"/>
    <property type="match status" value="1"/>
</dbReference>
<dbReference type="Pfam" id="PF02773">
    <property type="entry name" value="S-AdoMet_synt_C"/>
    <property type="match status" value="1"/>
</dbReference>
<dbReference type="Pfam" id="PF02772">
    <property type="entry name" value="S-AdoMet_synt_M"/>
    <property type="match status" value="1"/>
</dbReference>
<dbReference type="Pfam" id="PF00438">
    <property type="entry name" value="S-AdoMet_synt_N"/>
    <property type="match status" value="1"/>
</dbReference>
<dbReference type="PIRSF" id="PIRSF000497">
    <property type="entry name" value="MAT"/>
    <property type="match status" value="1"/>
</dbReference>
<dbReference type="SUPFAM" id="SSF55973">
    <property type="entry name" value="S-adenosylmethionine synthetase"/>
    <property type="match status" value="3"/>
</dbReference>
<dbReference type="PROSITE" id="PS00376">
    <property type="entry name" value="ADOMET_SYNTHASE_1"/>
    <property type="match status" value="1"/>
</dbReference>
<dbReference type="PROSITE" id="PS00377">
    <property type="entry name" value="ADOMET_SYNTHASE_2"/>
    <property type="match status" value="1"/>
</dbReference>
<name>METK_FUSNN</name>
<accession>Q8RGE5</accession>
<feature type="chain" id="PRO_0000174524" description="S-adenosylmethionine synthase">
    <location>
        <begin position="1"/>
        <end position="383"/>
    </location>
</feature>
<feature type="region of interest" description="Flexible loop" evidence="1">
    <location>
        <begin position="98"/>
        <end position="108"/>
    </location>
</feature>
<feature type="binding site" description="in other chain" evidence="1">
    <location>
        <position position="16"/>
    </location>
    <ligand>
        <name>ATP</name>
        <dbReference type="ChEBI" id="CHEBI:30616"/>
        <note>ligand shared between two neighboring subunits</note>
    </ligand>
</feature>
<feature type="binding site" evidence="1">
    <location>
        <position position="18"/>
    </location>
    <ligand>
        <name>Mg(2+)</name>
        <dbReference type="ChEBI" id="CHEBI:18420"/>
    </ligand>
</feature>
<feature type="binding site" evidence="1">
    <location>
        <position position="44"/>
    </location>
    <ligand>
        <name>K(+)</name>
        <dbReference type="ChEBI" id="CHEBI:29103"/>
    </ligand>
</feature>
<feature type="binding site" description="in other chain" evidence="1">
    <location>
        <position position="57"/>
    </location>
    <ligand>
        <name>L-methionine</name>
        <dbReference type="ChEBI" id="CHEBI:57844"/>
        <note>ligand shared between two neighboring subunits</note>
    </ligand>
</feature>
<feature type="binding site" description="in other chain" evidence="1">
    <location>
        <position position="98"/>
    </location>
    <ligand>
        <name>L-methionine</name>
        <dbReference type="ChEBI" id="CHEBI:57844"/>
        <note>ligand shared between two neighboring subunits</note>
    </ligand>
</feature>
<feature type="binding site" description="in other chain" evidence="1">
    <location>
        <begin position="158"/>
        <end position="160"/>
    </location>
    <ligand>
        <name>ATP</name>
        <dbReference type="ChEBI" id="CHEBI:30616"/>
        <note>ligand shared between two neighboring subunits</note>
    </ligand>
</feature>
<feature type="binding site" description="in other chain" evidence="1">
    <location>
        <begin position="226"/>
        <end position="227"/>
    </location>
    <ligand>
        <name>ATP</name>
        <dbReference type="ChEBI" id="CHEBI:30616"/>
        <note>ligand shared between two neighboring subunits</note>
    </ligand>
</feature>
<feature type="binding site" evidence="1">
    <location>
        <position position="235"/>
    </location>
    <ligand>
        <name>ATP</name>
        <dbReference type="ChEBI" id="CHEBI:30616"/>
        <note>ligand shared between two neighboring subunits</note>
    </ligand>
</feature>
<feature type="binding site" evidence="1">
    <location>
        <position position="235"/>
    </location>
    <ligand>
        <name>L-methionine</name>
        <dbReference type="ChEBI" id="CHEBI:57844"/>
        <note>ligand shared between two neighboring subunits</note>
    </ligand>
</feature>
<feature type="binding site" description="in other chain" evidence="1">
    <location>
        <begin position="241"/>
        <end position="242"/>
    </location>
    <ligand>
        <name>ATP</name>
        <dbReference type="ChEBI" id="CHEBI:30616"/>
        <note>ligand shared between two neighboring subunits</note>
    </ligand>
</feature>
<feature type="binding site" evidence="1">
    <location>
        <position position="258"/>
    </location>
    <ligand>
        <name>ATP</name>
        <dbReference type="ChEBI" id="CHEBI:30616"/>
        <note>ligand shared between two neighboring subunits</note>
    </ligand>
</feature>
<feature type="binding site" evidence="1">
    <location>
        <position position="262"/>
    </location>
    <ligand>
        <name>ATP</name>
        <dbReference type="ChEBI" id="CHEBI:30616"/>
        <note>ligand shared between two neighboring subunits</note>
    </ligand>
</feature>
<feature type="binding site" description="in other chain" evidence="1">
    <location>
        <position position="266"/>
    </location>
    <ligand>
        <name>L-methionine</name>
        <dbReference type="ChEBI" id="CHEBI:57844"/>
        <note>ligand shared between two neighboring subunits</note>
    </ligand>
</feature>
<keyword id="KW-0067">ATP-binding</keyword>
<keyword id="KW-0963">Cytoplasm</keyword>
<keyword id="KW-0460">Magnesium</keyword>
<keyword id="KW-0479">Metal-binding</keyword>
<keyword id="KW-0547">Nucleotide-binding</keyword>
<keyword id="KW-0554">One-carbon metabolism</keyword>
<keyword id="KW-0630">Potassium</keyword>
<keyword id="KW-1185">Reference proteome</keyword>
<keyword id="KW-0808">Transferase</keyword>
<sequence length="383" mass="41961">MKKFTYFTSEFVSPGHPDKISDQISDAILDACLKDDPNSRVACEVFCTTGLVVVGGEITTSTYIDVQDIVRKKIDEIGYRPGMGFDSNCGTLSCIHAQSPDIAMGVDIGGAGDQGIMFGGAVRETEELMPLALVLSREILVKLTNMMKSNEIEWARPDQKSQVTLAYDENGKVDHVDSIVVSVQHDEDTTHDEIEKIVIEKVVKPVLEKYNLSSDNIKYYINPTGRFVIGGPHGDTGVTGRKIIVDTYGGYFKHGGGAFSGKDPSKVDRSAAYAARWVAKNIVAAELADKCEIQLSYAIGVPKPVSVKVDTFGTSKVDEDKISEAVSKVFDLSPRGIEKALELREGNFKYQDLAAFGHIGRTDIDTPWERLNKVDELKKAIEL</sequence>
<gene>
    <name evidence="1" type="primary">metK</name>
    <name type="ordered locus">FN0355</name>
</gene>
<reference key="1">
    <citation type="journal article" date="2002" name="J. Bacteriol.">
        <title>Genome sequence and analysis of the oral bacterium Fusobacterium nucleatum strain ATCC 25586.</title>
        <authorList>
            <person name="Kapatral V."/>
            <person name="Anderson I."/>
            <person name="Ivanova N."/>
            <person name="Reznik G."/>
            <person name="Los T."/>
            <person name="Lykidis A."/>
            <person name="Bhattacharyya A."/>
            <person name="Bartman A."/>
            <person name="Gardner W."/>
            <person name="Grechkin G."/>
            <person name="Zhu L."/>
            <person name="Vasieva O."/>
            <person name="Chu L."/>
            <person name="Kogan Y."/>
            <person name="Chaga O."/>
            <person name="Goltsman E."/>
            <person name="Bernal A."/>
            <person name="Larsen N."/>
            <person name="D'Souza M."/>
            <person name="Walunas T."/>
            <person name="Pusch G."/>
            <person name="Haselkorn R."/>
            <person name="Fonstein M."/>
            <person name="Kyrpides N.C."/>
            <person name="Overbeek R."/>
        </authorList>
    </citation>
    <scope>NUCLEOTIDE SEQUENCE [LARGE SCALE GENOMIC DNA]</scope>
    <source>
        <strain>ATCC 25586 / DSM 15643 / BCRC 10681 / CIP 101130 / JCM 8532 / KCTC 2640 / LMG 13131 / VPI 4355</strain>
    </source>
</reference>
<protein>
    <recommendedName>
        <fullName evidence="1">S-adenosylmethionine synthase</fullName>
        <shortName evidence="1">AdoMet synthase</shortName>
        <ecNumber evidence="1">2.5.1.6</ecNumber>
    </recommendedName>
    <alternativeName>
        <fullName evidence="1">MAT</fullName>
    </alternativeName>
    <alternativeName>
        <fullName evidence="1">Methionine adenosyltransferase</fullName>
    </alternativeName>
</protein>
<comment type="function">
    <text evidence="1">Catalyzes the formation of S-adenosylmethionine (AdoMet) from methionine and ATP. The overall synthetic reaction is composed of two sequential steps, AdoMet formation and the subsequent tripolyphosphate hydrolysis which occurs prior to release of AdoMet from the enzyme.</text>
</comment>
<comment type="catalytic activity">
    <reaction evidence="1">
        <text>L-methionine + ATP + H2O = S-adenosyl-L-methionine + phosphate + diphosphate</text>
        <dbReference type="Rhea" id="RHEA:21080"/>
        <dbReference type="ChEBI" id="CHEBI:15377"/>
        <dbReference type="ChEBI" id="CHEBI:30616"/>
        <dbReference type="ChEBI" id="CHEBI:33019"/>
        <dbReference type="ChEBI" id="CHEBI:43474"/>
        <dbReference type="ChEBI" id="CHEBI:57844"/>
        <dbReference type="ChEBI" id="CHEBI:59789"/>
        <dbReference type="EC" id="2.5.1.6"/>
    </reaction>
</comment>
<comment type="cofactor">
    <cofactor evidence="1">
        <name>Mg(2+)</name>
        <dbReference type="ChEBI" id="CHEBI:18420"/>
    </cofactor>
    <text evidence="1">Binds 2 divalent ions per subunit.</text>
</comment>
<comment type="cofactor">
    <cofactor evidence="1">
        <name>K(+)</name>
        <dbReference type="ChEBI" id="CHEBI:29103"/>
    </cofactor>
    <text evidence="1">Binds 1 potassium ion per subunit.</text>
</comment>
<comment type="pathway">
    <text evidence="1">Amino-acid biosynthesis; S-adenosyl-L-methionine biosynthesis; S-adenosyl-L-methionine from L-methionine: step 1/1.</text>
</comment>
<comment type="subunit">
    <text evidence="1">Homotetramer; dimer of dimers.</text>
</comment>
<comment type="subcellular location">
    <subcellularLocation>
        <location evidence="1">Cytoplasm</location>
    </subcellularLocation>
</comment>
<comment type="similarity">
    <text evidence="1">Belongs to the AdoMet synthase family.</text>
</comment>